<feature type="chain" id="PRO_0000385968" description="GTPase Obg">
    <location>
        <begin position="1"/>
        <end position="396"/>
    </location>
</feature>
<feature type="domain" description="Obg" evidence="2">
    <location>
        <begin position="1"/>
        <end position="159"/>
    </location>
</feature>
<feature type="domain" description="OBG-type G" evidence="1">
    <location>
        <begin position="160"/>
        <end position="333"/>
    </location>
</feature>
<feature type="region of interest" description="Disordered" evidence="3">
    <location>
        <begin position="337"/>
        <end position="356"/>
    </location>
</feature>
<feature type="region of interest" description="Disordered" evidence="3">
    <location>
        <begin position="373"/>
        <end position="396"/>
    </location>
</feature>
<feature type="compositionally biased region" description="Basic and acidic residues" evidence="3">
    <location>
        <begin position="347"/>
        <end position="356"/>
    </location>
</feature>
<feature type="compositionally biased region" description="Acidic residues" evidence="3">
    <location>
        <begin position="381"/>
        <end position="396"/>
    </location>
</feature>
<feature type="binding site" evidence="1">
    <location>
        <begin position="166"/>
        <end position="173"/>
    </location>
    <ligand>
        <name>GTP</name>
        <dbReference type="ChEBI" id="CHEBI:37565"/>
    </ligand>
</feature>
<feature type="binding site" evidence="1">
    <location>
        <position position="173"/>
    </location>
    <ligand>
        <name>Mg(2+)</name>
        <dbReference type="ChEBI" id="CHEBI:18420"/>
    </ligand>
</feature>
<feature type="binding site" evidence="1">
    <location>
        <begin position="191"/>
        <end position="195"/>
    </location>
    <ligand>
        <name>GTP</name>
        <dbReference type="ChEBI" id="CHEBI:37565"/>
    </ligand>
</feature>
<feature type="binding site" evidence="1">
    <location>
        <position position="193"/>
    </location>
    <ligand>
        <name>Mg(2+)</name>
        <dbReference type="ChEBI" id="CHEBI:18420"/>
    </ligand>
</feature>
<feature type="binding site" evidence="1">
    <location>
        <begin position="213"/>
        <end position="216"/>
    </location>
    <ligand>
        <name>GTP</name>
        <dbReference type="ChEBI" id="CHEBI:37565"/>
    </ligand>
</feature>
<feature type="binding site" evidence="1">
    <location>
        <begin position="283"/>
        <end position="286"/>
    </location>
    <ligand>
        <name>GTP</name>
        <dbReference type="ChEBI" id="CHEBI:37565"/>
    </ligand>
</feature>
<feature type="binding site" evidence="1">
    <location>
        <begin position="314"/>
        <end position="316"/>
    </location>
    <ligand>
        <name>GTP</name>
        <dbReference type="ChEBI" id="CHEBI:37565"/>
    </ligand>
</feature>
<name>OBG_HAHCH</name>
<sequence length="396" mass="43178">MKFVDEATIYVEAGKGGNGCLSFRREKYVPKGGPDGGDGGDGGSVILEADESINTLIDYRYTRKFKAANGESGRGGNCTGASGADLVLKVPVGTTIIDTDIDEVLGDLVEVGQQIKVAQGGFHGLGNTRYKSSVNQAPRQTKPGQPGESRNIRLELKVLADVGLLGLPNAGKSTLIRGISSAKPKVADYPFTTLVPNLGVVRVQAHRSFVVADIPGLIEGAADGAGLGIRFLKHLVRTRLLLHVVDVSPLDESDPVESAVKIVAELEKFSPALAARDRWLVLNKTDLLAEDEKEAICADILKRLNWSGPSYEISALAGEGLQRLCQDIMTWIERRAEEERDDPEVAEADRLNREQMDQEVRERIQFLNEQRRLARKKAKESDDDDDDEDVEVFYAP</sequence>
<accession>Q2S9T3</accession>
<proteinExistence type="inferred from homology"/>
<gene>
    <name evidence="1" type="primary">obg</name>
    <name type="ordered locus">HCH_05939</name>
</gene>
<organism>
    <name type="scientific">Hahella chejuensis (strain KCTC 2396)</name>
    <dbReference type="NCBI Taxonomy" id="349521"/>
    <lineage>
        <taxon>Bacteria</taxon>
        <taxon>Pseudomonadati</taxon>
        <taxon>Pseudomonadota</taxon>
        <taxon>Gammaproteobacteria</taxon>
        <taxon>Oceanospirillales</taxon>
        <taxon>Hahellaceae</taxon>
        <taxon>Hahella</taxon>
    </lineage>
</organism>
<reference key="1">
    <citation type="journal article" date="2005" name="Nucleic Acids Res.">
        <title>Genomic blueprint of Hahella chejuensis, a marine microbe producing an algicidal agent.</title>
        <authorList>
            <person name="Jeong H."/>
            <person name="Yim J.H."/>
            <person name="Lee C."/>
            <person name="Choi S.-H."/>
            <person name="Park Y.K."/>
            <person name="Yoon S.H."/>
            <person name="Hur C.-G."/>
            <person name="Kang H.-Y."/>
            <person name="Kim D."/>
            <person name="Lee H.H."/>
            <person name="Park K.H."/>
            <person name="Park S.-H."/>
            <person name="Park H.-S."/>
            <person name="Lee H.K."/>
            <person name="Oh T.K."/>
            <person name="Kim J.F."/>
        </authorList>
    </citation>
    <scope>NUCLEOTIDE SEQUENCE [LARGE SCALE GENOMIC DNA]</scope>
    <source>
        <strain>KCTC 2396</strain>
    </source>
</reference>
<keyword id="KW-0963">Cytoplasm</keyword>
<keyword id="KW-0342">GTP-binding</keyword>
<keyword id="KW-0378">Hydrolase</keyword>
<keyword id="KW-0460">Magnesium</keyword>
<keyword id="KW-0479">Metal-binding</keyword>
<keyword id="KW-0547">Nucleotide-binding</keyword>
<keyword id="KW-1185">Reference proteome</keyword>
<protein>
    <recommendedName>
        <fullName evidence="1">GTPase Obg</fullName>
        <ecNumber evidence="1">3.6.5.-</ecNumber>
    </recommendedName>
    <alternativeName>
        <fullName evidence="1">GTP-binding protein Obg</fullName>
    </alternativeName>
</protein>
<evidence type="ECO:0000255" key="1">
    <source>
        <dbReference type="HAMAP-Rule" id="MF_01454"/>
    </source>
</evidence>
<evidence type="ECO:0000255" key="2">
    <source>
        <dbReference type="PROSITE-ProRule" id="PRU01231"/>
    </source>
</evidence>
<evidence type="ECO:0000256" key="3">
    <source>
        <dbReference type="SAM" id="MobiDB-lite"/>
    </source>
</evidence>
<dbReference type="EC" id="3.6.5.-" evidence="1"/>
<dbReference type="EMBL" id="CP000155">
    <property type="protein sequence ID" value="ABC32591.1"/>
    <property type="molecule type" value="Genomic_DNA"/>
</dbReference>
<dbReference type="RefSeq" id="WP_011399649.1">
    <property type="nucleotide sequence ID" value="NC_007645.1"/>
</dbReference>
<dbReference type="SMR" id="Q2S9T3"/>
<dbReference type="STRING" id="349521.HCH_05939"/>
<dbReference type="KEGG" id="hch:HCH_05939"/>
<dbReference type="eggNOG" id="COG0536">
    <property type="taxonomic scope" value="Bacteria"/>
</dbReference>
<dbReference type="HOGENOM" id="CLU_011747_2_0_6"/>
<dbReference type="OrthoDB" id="9807318at2"/>
<dbReference type="Proteomes" id="UP000000238">
    <property type="component" value="Chromosome"/>
</dbReference>
<dbReference type="GO" id="GO:0005737">
    <property type="term" value="C:cytoplasm"/>
    <property type="evidence" value="ECO:0007669"/>
    <property type="project" value="UniProtKB-SubCell"/>
</dbReference>
<dbReference type="GO" id="GO:0005525">
    <property type="term" value="F:GTP binding"/>
    <property type="evidence" value="ECO:0007669"/>
    <property type="project" value="UniProtKB-UniRule"/>
</dbReference>
<dbReference type="GO" id="GO:0003924">
    <property type="term" value="F:GTPase activity"/>
    <property type="evidence" value="ECO:0007669"/>
    <property type="project" value="UniProtKB-UniRule"/>
</dbReference>
<dbReference type="GO" id="GO:0000287">
    <property type="term" value="F:magnesium ion binding"/>
    <property type="evidence" value="ECO:0007669"/>
    <property type="project" value="InterPro"/>
</dbReference>
<dbReference type="GO" id="GO:0042254">
    <property type="term" value="P:ribosome biogenesis"/>
    <property type="evidence" value="ECO:0007669"/>
    <property type="project" value="UniProtKB-UniRule"/>
</dbReference>
<dbReference type="CDD" id="cd01898">
    <property type="entry name" value="Obg"/>
    <property type="match status" value="1"/>
</dbReference>
<dbReference type="FunFam" id="2.70.210.12:FF:000001">
    <property type="entry name" value="GTPase Obg"/>
    <property type="match status" value="1"/>
</dbReference>
<dbReference type="Gene3D" id="2.70.210.12">
    <property type="entry name" value="GTP1/OBG domain"/>
    <property type="match status" value="1"/>
</dbReference>
<dbReference type="Gene3D" id="3.40.50.300">
    <property type="entry name" value="P-loop containing nucleotide triphosphate hydrolases"/>
    <property type="match status" value="1"/>
</dbReference>
<dbReference type="HAMAP" id="MF_01454">
    <property type="entry name" value="GTPase_Obg"/>
    <property type="match status" value="1"/>
</dbReference>
<dbReference type="InterPro" id="IPR031167">
    <property type="entry name" value="G_OBG"/>
</dbReference>
<dbReference type="InterPro" id="IPR006073">
    <property type="entry name" value="GTP-bd"/>
</dbReference>
<dbReference type="InterPro" id="IPR014100">
    <property type="entry name" value="GTP-bd_Obg/CgtA"/>
</dbReference>
<dbReference type="InterPro" id="IPR006074">
    <property type="entry name" value="GTP1-OBG_CS"/>
</dbReference>
<dbReference type="InterPro" id="IPR006169">
    <property type="entry name" value="GTP1_OBG_dom"/>
</dbReference>
<dbReference type="InterPro" id="IPR036726">
    <property type="entry name" value="GTP1_OBG_dom_sf"/>
</dbReference>
<dbReference type="InterPro" id="IPR045086">
    <property type="entry name" value="OBG_GTPase"/>
</dbReference>
<dbReference type="InterPro" id="IPR027417">
    <property type="entry name" value="P-loop_NTPase"/>
</dbReference>
<dbReference type="NCBIfam" id="TIGR02729">
    <property type="entry name" value="Obg_CgtA"/>
    <property type="match status" value="1"/>
</dbReference>
<dbReference type="NCBIfam" id="NF008955">
    <property type="entry name" value="PRK12297.1"/>
    <property type="match status" value="1"/>
</dbReference>
<dbReference type="NCBIfam" id="NF008956">
    <property type="entry name" value="PRK12299.1"/>
    <property type="match status" value="1"/>
</dbReference>
<dbReference type="PANTHER" id="PTHR11702">
    <property type="entry name" value="DEVELOPMENTALLY REGULATED GTP-BINDING PROTEIN-RELATED"/>
    <property type="match status" value="1"/>
</dbReference>
<dbReference type="PANTHER" id="PTHR11702:SF31">
    <property type="entry name" value="MITOCHONDRIAL RIBOSOME-ASSOCIATED GTPASE 2"/>
    <property type="match status" value="1"/>
</dbReference>
<dbReference type="Pfam" id="PF01018">
    <property type="entry name" value="GTP1_OBG"/>
    <property type="match status" value="1"/>
</dbReference>
<dbReference type="Pfam" id="PF01926">
    <property type="entry name" value="MMR_HSR1"/>
    <property type="match status" value="1"/>
</dbReference>
<dbReference type="PIRSF" id="PIRSF002401">
    <property type="entry name" value="GTP_bd_Obg/CgtA"/>
    <property type="match status" value="1"/>
</dbReference>
<dbReference type="PRINTS" id="PR00326">
    <property type="entry name" value="GTP1OBG"/>
</dbReference>
<dbReference type="SUPFAM" id="SSF82051">
    <property type="entry name" value="Obg GTP-binding protein N-terminal domain"/>
    <property type="match status" value="1"/>
</dbReference>
<dbReference type="SUPFAM" id="SSF52540">
    <property type="entry name" value="P-loop containing nucleoside triphosphate hydrolases"/>
    <property type="match status" value="1"/>
</dbReference>
<dbReference type="PROSITE" id="PS51710">
    <property type="entry name" value="G_OBG"/>
    <property type="match status" value="1"/>
</dbReference>
<dbReference type="PROSITE" id="PS00905">
    <property type="entry name" value="GTP1_OBG"/>
    <property type="match status" value="1"/>
</dbReference>
<dbReference type="PROSITE" id="PS51883">
    <property type="entry name" value="OBG"/>
    <property type="match status" value="1"/>
</dbReference>
<comment type="function">
    <text evidence="1">An essential GTPase which binds GTP, GDP and possibly (p)ppGpp with moderate affinity, with high nucleotide exchange rates and a fairly low GTP hydrolysis rate. Plays a role in control of the cell cycle, stress response, ribosome biogenesis and in those bacteria that undergo differentiation, in morphogenesis control.</text>
</comment>
<comment type="cofactor">
    <cofactor evidence="1">
        <name>Mg(2+)</name>
        <dbReference type="ChEBI" id="CHEBI:18420"/>
    </cofactor>
</comment>
<comment type="subunit">
    <text evidence="1">Monomer.</text>
</comment>
<comment type="subcellular location">
    <subcellularLocation>
        <location evidence="1">Cytoplasm</location>
    </subcellularLocation>
</comment>
<comment type="similarity">
    <text evidence="1">Belongs to the TRAFAC class OBG-HflX-like GTPase superfamily. OBG GTPase family.</text>
</comment>